<keyword id="KW-0143">Chaperone</keyword>
<keyword id="KW-0496">Mitochondrion</keyword>
<keyword id="KW-1185">Reference proteome</keyword>
<keyword id="KW-0809">Transit peptide</keyword>
<protein>
    <recommendedName>
        <fullName>Mitochondrial zinc maintenance protein 1, mitochondrial</fullName>
    </recommendedName>
</protein>
<reference key="1">
    <citation type="journal article" date="2004" name="Proc. Natl. Acad. Sci. U.S.A.">
        <title>The diploid genome sequence of Candida albicans.</title>
        <authorList>
            <person name="Jones T."/>
            <person name="Federspiel N.A."/>
            <person name="Chibana H."/>
            <person name="Dungan J."/>
            <person name="Kalman S."/>
            <person name="Magee B.B."/>
            <person name="Newport G."/>
            <person name="Thorstenson Y.R."/>
            <person name="Agabian N."/>
            <person name="Magee P.T."/>
            <person name="Davis R.W."/>
            <person name="Scherer S."/>
        </authorList>
    </citation>
    <scope>NUCLEOTIDE SEQUENCE [LARGE SCALE GENOMIC DNA]</scope>
    <source>
        <strain>SC5314 / ATCC MYA-2876</strain>
    </source>
</reference>
<reference key="2">
    <citation type="journal article" date="2007" name="Genome Biol.">
        <title>Assembly of the Candida albicans genome into sixteen supercontigs aligned on the eight chromosomes.</title>
        <authorList>
            <person name="van het Hoog M."/>
            <person name="Rast T.J."/>
            <person name="Martchenko M."/>
            <person name="Grindle S."/>
            <person name="Dignard D."/>
            <person name="Hogues H."/>
            <person name="Cuomo C."/>
            <person name="Berriman M."/>
            <person name="Scherer S."/>
            <person name="Magee B.B."/>
            <person name="Whiteway M."/>
            <person name="Chibana H."/>
            <person name="Nantel A."/>
            <person name="Magee P.T."/>
        </authorList>
    </citation>
    <scope>GENOME REANNOTATION</scope>
    <source>
        <strain>SC5314 / ATCC MYA-2876</strain>
    </source>
</reference>
<reference key="3">
    <citation type="journal article" date="2013" name="Genome Biol.">
        <title>Assembly of a phased diploid Candida albicans genome facilitates allele-specific measurements and provides a simple model for repeat and indel structure.</title>
        <authorList>
            <person name="Muzzey D."/>
            <person name="Schwartz K."/>
            <person name="Weissman J.S."/>
            <person name="Sherlock G."/>
        </authorList>
    </citation>
    <scope>NUCLEOTIDE SEQUENCE [LARGE SCALE GENOMIC DNA]</scope>
    <scope>GENOME REANNOTATION</scope>
    <source>
        <strain>SC5314 / ATCC MYA-2876</strain>
    </source>
</reference>
<gene>
    <name type="primary">MZM1</name>
    <name type="synonym">FMP16</name>
    <name type="ordered locus">CAALFM_C300340WA</name>
    <name type="ORF">CaO19.12888</name>
    <name type="ORF">CaO19.5433</name>
</gene>
<dbReference type="EMBL" id="CP017625">
    <property type="protein sequence ID" value="AOW28084.1"/>
    <property type="molecule type" value="Genomic_DNA"/>
</dbReference>
<dbReference type="RefSeq" id="XP_717805.1">
    <property type="nucleotide sequence ID" value="XM_712712.1"/>
</dbReference>
<dbReference type="SMR" id="Q5A7N3"/>
<dbReference type="FunCoup" id="Q5A7N3">
    <property type="interactions" value="19"/>
</dbReference>
<dbReference type="STRING" id="237561.Q5A7N3"/>
<dbReference type="EnsemblFungi" id="C3_00340W_A-T">
    <property type="protein sequence ID" value="C3_00340W_A-T-p1"/>
    <property type="gene ID" value="C3_00340W_A"/>
</dbReference>
<dbReference type="GeneID" id="3640544"/>
<dbReference type="KEGG" id="cal:CAALFM_C300340WA"/>
<dbReference type="CGD" id="CAL0000189259">
    <property type="gene designation" value="orf19.12888"/>
</dbReference>
<dbReference type="VEuPathDB" id="FungiDB:C3_00340W_A"/>
<dbReference type="eggNOG" id="ENOG502S6EF">
    <property type="taxonomic scope" value="Eukaryota"/>
</dbReference>
<dbReference type="HOGENOM" id="CLU_147114_2_2_1"/>
<dbReference type="InParanoid" id="Q5A7N3"/>
<dbReference type="OMA" id="KYKLRIH"/>
<dbReference type="OrthoDB" id="529194at2759"/>
<dbReference type="PRO" id="PR:Q5A7N3"/>
<dbReference type="Proteomes" id="UP000000559">
    <property type="component" value="Chromosome 3"/>
</dbReference>
<dbReference type="GO" id="GO:0005759">
    <property type="term" value="C:mitochondrial matrix"/>
    <property type="evidence" value="ECO:0000318"/>
    <property type="project" value="GO_Central"/>
</dbReference>
<dbReference type="GO" id="GO:0044183">
    <property type="term" value="F:protein folding chaperone"/>
    <property type="evidence" value="ECO:0000318"/>
    <property type="project" value="GO_Central"/>
</dbReference>
<dbReference type="GO" id="GO:0034551">
    <property type="term" value="P:mitochondrial respiratory chain complex III assembly"/>
    <property type="evidence" value="ECO:0000318"/>
    <property type="project" value="GO_Central"/>
</dbReference>
<dbReference type="CDD" id="cd20267">
    <property type="entry name" value="Complex1_LYR_LYRM7"/>
    <property type="match status" value="1"/>
</dbReference>
<dbReference type="InterPro" id="IPR045298">
    <property type="entry name" value="Complex1_LYR_LYRM7"/>
</dbReference>
<dbReference type="InterPro" id="IPR050435">
    <property type="entry name" value="MZM1/LYRM7"/>
</dbReference>
<dbReference type="PANTHER" id="PTHR46749">
    <property type="entry name" value="COMPLEX III ASSEMBLY FACTOR LYRM7"/>
    <property type="match status" value="1"/>
</dbReference>
<dbReference type="PANTHER" id="PTHR46749:SF1">
    <property type="entry name" value="COMPLEX III ASSEMBLY FACTOR LYRM7"/>
    <property type="match status" value="1"/>
</dbReference>
<proteinExistence type="inferred from homology"/>
<organism>
    <name type="scientific">Candida albicans (strain SC5314 / ATCC MYA-2876)</name>
    <name type="common">Yeast</name>
    <dbReference type="NCBI Taxonomy" id="237561"/>
    <lineage>
        <taxon>Eukaryota</taxon>
        <taxon>Fungi</taxon>
        <taxon>Dikarya</taxon>
        <taxon>Ascomycota</taxon>
        <taxon>Saccharomycotina</taxon>
        <taxon>Pichiomycetes</taxon>
        <taxon>Debaryomycetaceae</taxon>
        <taxon>Candida/Lodderomyces clade</taxon>
        <taxon>Candida</taxon>
    </lineage>
</organism>
<comment type="function">
    <text evidence="1">Assembly factor required for Rieske Fe-S protein RIP1 incorporation into the cytochrome b-c1 (CIII) complex. Functions as a chaperone, binding to this subunit within the mitochondrial matrix and stabilizing it prior to its translocation and insertion into the late CIII dimeric intermediate within the mitochondrial inner membrane. Modulates the mitochondrial matrix zinc pool (By similarity).</text>
</comment>
<comment type="subunit">
    <text evidence="1">Interacts with RIP1.</text>
</comment>
<comment type="subcellular location">
    <subcellularLocation>
        <location evidence="1">Mitochondrion matrix</location>
    </subcellularLocation>
</comment>
<comment type="similarity">
    <text evidence="4">Belongs to the complex I LYR family. MZM1 subfamily.</text>
</comment>
<accession>Q5A7N3</accession>
<accession>A0A1D8PIW3</accession>
<feature type="transit peptide" description="Mitochondrion" evidence="2">
    <location>
        <begin position="1"/>
        <end position="10"/>
    </location>
</feature>
<feature type="chain" id="PRO_0000405488" description="Mitochondrial zinc maintenance protein 1, mitochondrial">
    <location>
        <begin position="11"/>
        <end position="117"/>
    </location>
</feature>
<feature type="region of interest" description="Disordered" evidence="3">
    <location>
        <begin position="98"/>
        <end position="117"/>
    </location>
</feature>
<evidence type="ECO:0000250" key="1"/>
<evidence type="ECO:0000255" key="2"/>
<evidence type="ECO:0000256" key="3">
    <source>
        <dbReference type="SAM" id="MobiDB-lite"/>
    </source>
</evidence>
<evidence type="ECO:0000305" key="4"/>
<sequence>MSSVLSAYRNALRATKVAFRQDLPILQAARVQLKQGIRDNSNLQAQPEIEEAVQKLNEVAKFLIQNIVQGEKQQDGKYFLNFHEKTELGDNETIKQGRKEMGSLAGKKGSSIKSCND</sequence>
<name>MZM1_CANAL</name>